<accession>P03407</accession>
<gene>
    <name evidence="1" type="primary">nef</name>
</gene>
<dbReference type="EMBL" id="K02007">
    <property type="protein sequence ID" value="AAB59883.1"/>
    <property type="molecule type" value="Genomic_RNA"/>
</dbReference>
<dbReference type="PIR" id="A04009">
    <property type="entry name" value="ASLJO2"/>
</dbReference>
<dbReference type="PDB" id="3RBB">
    <property type="method" value="X-ray"/>
    <property type="resolution" value="2.35 A"/>
    <property type="chains" value="A/C=45-210"/>
</dbReference>
<dbReference type="PDB" id="3REA">
    <property type="method" value="X-ray"/>
    <property type="resolution" value="2.00 A"/>
    <property type="chains" value="A/C=45-210"/>
</dbReference>
<dbReference type="PDB" id="3REB">
    <property type="method" value="X-ray"/>
    <property type="resolution" value="3.45 A"/>
    <property type="chains" value="A/C=45-210"/>
</dbReference>
<dbReference type="PDB" id="4ORZ">
    <property type="method" value="X-ray"/>
    <property type="resolution" value="2.00 A"/>
    <property type="chains" value="B=45-209"/>
</dbReference>
<dbReference type="PDB" id="4U1K">
    <property type="method" value="X-ray"/>
    <property type="resolution" value="2.09 A"/>
    <property type="chains" value="C/F=75-83"/>
</dbReference>
<dbReference type="PDB" id="4U1L">
    <property type="method" value="X-ray"/>
    <property type="resolution" value="2.06 A"/>
    <property type="chains" value="C/F=75-83"/>
</dbReference>
<dbReference type="PDB" id="4U1M">
    <property type="method" value="X-ray"/>
    <property type="resolution" value="1.18 A"/>
    <property type="chains" value="C=75-83"/>
</dbReference>
<dbReference type="PDB" id="4U1N">
    <property type="method" value="X-ray"/>
    <property type="resolution" value="1.77 A"/>
    <property type="chains" value="C=75-83"/>
</dbReference>
<dbReference type="PDB" id="4U5W">
    <property type="method" value="X-ray"/>
    <property type="resolution" value="1.86 A"/>
    <property type="chains" value="A/C=62-209"/>
</dbReference>
<dbReference type="PDB" id="5XOV">
    <property type="method" value="X-ray"/>
    <property type="resolution" value="2.68 A"/>
    <property type="chains" value="C/F=138-147"/>
</dbReference>
<dbReference type="PDB" id="6B72">
    <property type="method" value="X-ray"/>
    <property type="resolution" value="3.20 A"/>
    <property type="chains" value="A/B/C/D/E/F=57-207"/>
</dbReference>
<dbReference type="PDB" id="7D7S">
    <property type="method" value="X-ray"/>
    <property type="resolution" value="3.32 A"/>
    <property type="chains" value="A/B=1-209"/>
</dbReference>
<dbReference type="PDB" id="8F2P">
    <property type="method" value="X-ray"/>
    <property type="resolution" value="2.63 A"/>
    <property type="chains" value="A=62-209"/>
</dbReference>
<dbReference type="PDBsum" id="3RBB"/>
<dbReference type="PDBsum" id="3REA"/>
<dbReference type="PDBsum" id="3REB"/>
<dbReference type="PDBsum" id="4ORZ"/>
<dbReference type="PDBsum" id="4U1K"/>
<dbReference type="PDBsum" id="4U1L"/>
<dbReference type="PDBsum" id="4U1M"/>
<dbReference type="PDBsum" id="4U1N"/>
<dbReference type="PDBsum" id="4U5W"/>
<dbReference type="PDBsum" id="5XOV"/>
<dbReference type="PDBsum" id="6B72"/>
<dbReference type="PDBsum" id="7D7S"/>
<dbReference type="PDBsum" id="8F2P"/>
<dbReference type="SMR" id="P03407"/>
<dbReference type="DIP" id="DIP-29212N"/>
<dbReference type="IntAct" id="P03407">
    <property type="interactions" value="7"/>
</dbReference>
<dbReference type="MINT" id="P03407"/>
<dbReference type="iPTMnet" id="P03407"/>
<dbReference type="ABCD" id="P03407">
    <property type="antibodies" value="2 sequenced antibodies"/>
</dbReference>
<dbReference type="EvolutionaryTrace" id="P03407"/>
<dbReference type="Proteomes" id="UP000007688">
    <property type="component" value="Genome"/>
</dbReference>
<dbReference type="GO" id="GO:0005576">
    <property type="term" value="C:extracellular region"/>
    <property type="evidence" value="ECO:0007669"/>
    <property type="project" value="UniProtKB-SubCell"/>
</dbReference>
<dbReference type="GO" id="GO:0044178">
    <property type="term" value="C:host cell Golgi membrane"/>
    <property type="evidence" value="ECO:0007669"/>
    <property type="project" value="UniProtKB-SubCell"/>
</dbReference>
<dbReference type="GO" id="GO:0020002">
    <property type="term" value="C:host cell plasma membrane"/>
    <property type="evidence" value="ECO:0007669"/>
    <property type="project" value="UniProtKB-SubCell"/>
</dbReference>
<dbReference type="GO" id="GO:0016020">
    <property type="term" value="C:membrane"/>
    <property type="evidence" value="ECO:0007669"/>
    <property type="project" value="UniProtKB-UniRule"/>
</dbReference>
<dbReference type="GO" id="GO:0044423">
    <property type="term" value="C:virion component"/>
    <property type="evidence" value="ECO:0007669"/>
    <property type="project" value="UniProtKB-UniRule"/>
</dbReference>
<dbReference type="GO" id="GO:0005525">
    <property type="term" value="F:GTP binding"/>
    <property type="evidence" value="ECO:0007669"/>
    <property type="project" value="UniProtKB-UniRule"/>
</dbReference>
<dbReference type="GO" id="GO:0017124">
    <property type="term" value="F:SH3 domain binding"/>
    <property type="evidence" value="ECO:0007669"/>
    <property type="project" value="UniProtKB-UniRule"/>
</dbReference>
<dbReference type="GO" id="GO:0007171">
    <property type="term" value="P:activation of transmembrane receptor protein tyrosine kinase activity"/>
    <property type="evidence" value="ECO:0000314"/>
    <property type="project" value="CACAO"/>
</dbReference>
<dbReference type="GO" id="GO:0075509">
    <property type="term" value="P:endocytosis involved in viral entry into host cell"/>
    <property type="evidence" value="ECO:0000269"/>
    <property type="project" value="DisProt"/>
</dbReference>
<dbReference type="GO" id="GO:0046776">
    <property type="term" value="P:symbiont-mediated suppression of host antigen processing and presentation of peptide antigen via MHC class I"/>
    <property type="evidence" value="ECO:0007669"/>
    <property type="project" value="UniProtKB-UniRule"/>
</dbReference>
<dbReference type="GO" id="GO:0039505">
    <property type="term" value="P:symbiont-mediated suppression of host antigen processing and presentation of peptide antigen via MHC class II"/>
    <property type="evidence" value="ECO:0007669"/>
    <property type="project" value="UniProtKB-UniRule"/>
</dbReference>
<dbReference type="GO" id="GO:0140321">
    <property type="term" value="P:symbiont-mediated suppression of host autophagy"/>
    <property type="evidence" value="ECO:0007669"/>
    <property type="project" value="UniProtKB-KW"/>
</dbReference>
<dbReference type="DisProt" id="DP02889"/>
<dbReference type="FunFam" id="3.30.62.10:FF:000001">
    <property type="entry name" value="Protein Nef"/>
    <property type="match status" value="1"/>
</dbReference>
<dbReference type="Gene3D" id="4.10.890.10">
    <property type="entry name" value="HIV 1 nef anchor domain"/>
    <property type="match status" value="1"/>
</dbReference>
<dbReference type="Gene3D" id="3.30.62.10">
    <property type="entry name" value="Nef Regulatory Factor"/>
    <property type="match status" value="1"/>
</dbReference>
<dbReference type="HAMAP" id="MF_04078">
    <property type="entry name" value="NEF_HIV"/>
    <property type="match status" value="1"/>
</dbReference>
<dbReference type="InterPro" id="IPR027480">
    <property type="entry name" value="HIV-1_Nef_anchor_sf"/>
</dbReference>
<dbReference type="InterPro" id="IPR027481">
    <property type="entry name" value="HIV-1_Nef_core_sf"/>
</dbReference>
<dbReference type="InterPro" id="IPR001558">
    <property type="entry name" value="HIV_Nef"/>
</dbReference>
<dbReference type="Pfam" id="PF00469">
    <property type="entry name" value="F-protein"/>
    <property type="match status" value="1"/>
</dbReference>
<dbReference type="SUPFAM" id="SSF55671">
    <property type="entry name" value="Regulatory factor Nef"/>
    <property type="match status" value="1"/>
</dbReference>
<feature type="initiator methionine" description="Removed; by host" evidence="1">
    <location>
        <position position="1"/>
    </location>
</feature>
<feature type="chain" id="PRO_0000038333" description="Protein Nef" evidence="1">
    <location>
        <begin position="2"/>
        <end position="210"/>
    </location>
</feature>
<feature type="chain" id="PRO_0000038334" description="C-terminal core protein" evidence="1">
    <location>
        <begin position="62"/>
        <end position="210"/>
    </location>
</feature>
<feature type="region of interest" description="Disordered" evidence="2">
    <location>
        <begin position="1"/>
        <end position="37"/>
    </location>
</feature>
<feature type="region of interest" description="Acidic; interacts with host PACS1 and PACS2; stabilizes the interaction of NEF/MHC-I with host AP1M1; necessary for MHC-I internalization" evidence="1">
    <location>
        <begin position="66"/>
        <end position="69"/>
    </location>
</feature>
<feature type="region of interest" description="SH3-binding; interaction with Src family tyrosine kinases" evidence="1">
    <location>
        <begin position="73"/>
        <end position="82"/>
    </location>
</feature>
<feature type="region of interest" description="Mediates dimerization, Nef-PTE1 interaction" evidence="1">
    <location>
        <begin position="112"/>
        <end position="128"/>
    </location>
</feature>
<feature type="region of interest" description="Binding to ATP6V1H" evidence="1 15">
    <location>
        <begin position="152"/>
        <end position="184"/>
    </location>
</feature>
<feature type="short sequence motif" description="PxxP; stabilizes the interaction of NEF/MHC-I with host AP1M1; necessary for MHC-I internalization" evidence="1">
    <location>
        <begin position="76"/>
        <end position="79"/>
    </location>
</feature>
<feature type="short sequence motif" description="Dileucine internalization motif; necessary for CD4 internalization" evidence="1 12">
    <location>
        <begin position="168"/>
        <end position="169"/>
    </location>
</feature>
<feature type="short sequence motif" description="Diacidic; necessary for CD4 internalization" evidence="1">
    <location>
        <begin position="178"/>
        <end position="179"/>
    </location>
</feature>
<feature type="compositionally biased region" description="Basic and acidic residues" evidence="2">
    <location>
        <begin position="16"/>
        <end position="29"/>
    </location>
</feature>
<feature type="site" description="Might play a role in AP-1 recruitment to the Nef-MHC-I complex" evidence="1">
    <location>
        <position position="20"/>
    </location>
</feature>
<feature type="site" description="Cleavage; by viral protease" evidence="1">
    <location>
        <begin position="61"/>
        <end position="62"/>
    </location>
</feature>
<feature type="modified residue" description="Phosphoserine; by host" evidence="1 11">
    <location>
        <position position="6"/>
    </location>
</feature>
<feature type="lipid moiety-binding region" description="N-myristoyl glycine; by host" evidence="1">
    <location>
        <position position="2"/>
    </location>
</feature>
<feature type="mutagenesis site" description="Complete loss of viral replication. Incapacity to trigger cellular activation, probably due to reduced interaction with the TCR environment." evidence="5">
    <original>R</original>
    <variation>T</variation>
    <location>
        <position position="75"/>
    </location>
</feature>
<feature type="mutagenesis site" description="No effect." evidence="14">
    <original>S</original>
    <variation>A</variation>
    <location>
        <position position="107"/>
    </location>
</feature>
<feature type="mutagenesis site" description="Partial loss of binding to NBP1." evidence="8">
    <original>LL</original>
    <variation>AA</variation>
    <location>
        <begin position="168"/>
        <end position="169"/>
    </location>
</feature>
<feature type="mutagenesis site" description="Partial loss of binding to NBP1." evidence="8">
    <original>ED</original>
    <variation>AA</variation>
    <location>
        <begin position="178"/>
        <end position="179"/>
    </location>
</feature>
<feature type="helix" evidence="17">
    <location>
        <begin position="60"/>
        <end position="70"/>
    </location>
</feature>
<feature type="strand" evidence="20">
    <location>
        <begin position="72"/>
        <end position="74"/>
    </location>
</feature>
<feature type="helix" evidence="19">
    <location>
        <begin position="85"/>
        <end position="95"/>
    </location>
</feature>
<feature type="turn" evidence="21">
    <location>
        <begin position="100"/>
        <end position="103"/>
    </location>
</feature>
<feature type="helix" evidence="19">
    <location>
        <begin position="108"/>
        <end position="122"/>
    </location>
</feature>
<feature type="strand" evidence="19">
    <location>
        <begin position="134"/>
        <end position="136"/>
    </location>
</feature>
<feature type="strand" evidence="19">
    <location>
        <begin position="140"/>
        <end position="142"/>
    </location>
</feature>
<feature type="strand" evidence="19">
    <location>
        <begin position="147"/>
        <end position="151"/>
    </location>
</feature>
<feature type="helix" evidence="16">
    <location>
        <begin position="166"/>
        <end position="169"/>
    </location>
</feature>
<feature type="helix" evidence="16">
    <location>
        <begin position="171"/>
        <end position="173"/>
    </location>
</feature>
<feature type="helix" evidence="18">
    <location>
        <begin position="180"/>
        <end position="182"/>
    </location>
</feature>
<feature type="strand" evidence="19">
    <location>
        <begin position="185"/>
        <end position="189"/>
    </location>
</feature>
<feature type="helix" evidence="19">
    <location>
        <begin position="191"/>
        <end position="194"/>
    </location>
</feature>
<feature type="helix" evidence="19">
    <location>
        <begin position="198"/>
        <end position="202"/>
    </location>
</feature>
<feature type="helix" evidence="19">
    <location>
        <begin position="204"/>
        <end position="206"/>
    </location>
</feature>
<keyword id="KW-0002">3D-structure</keyword>
<keyword id="KW-0014">AIDS</keyword>
<keyword id="KW-0053">Apoptosis</keyword>
<keyword id="KW-0244">Early protein</keyword>
<keyword id="KW-1032">Host cell membrane</keyword>
<keyword id="KW-1040">Host Golgi apparatus</keyword>
<keyword id="KW-1043">Host membrane</keyword>
<keyword id="KW-0945">Host-virus interaction</keyword>
<keyword id="KW-1080">Inhibition of host adaptive immune response by virus</keyword>
<keyword id="KW-1083">Inhibition of host autophagy by virus</keyword>
<keyword id="KW-1115">Inhibition of host MHC class I molecule presentation by virus</keyword>
<keyword id="KW-1116">Inhibition of host MHC class II molecule presentation by virus</keyword>
<keyword id="KW-0449">Lipoprotein</keyword>
<keyword id="KW-0472">Membrane</keyword>
<keyword id="KW-0519">Myristate</keyword>
<keyword id="KW-0597">Phosphoprotein</keyword>
<keyword id="KW-1185">Reference proteome</keyword>
<keyword id="KW-0964">Secreted</keyword>
<keyword id="KW-0729">SH3-binding</keyword>
<keyword id="KW-0899">Viral immunoevasion</keyword>
<keyword id="KW-0946">Virion</keyword>
<keyword id="KW-0843">Virulence</keyword>
<sequence>MGGKWSKRSMGGWSAIRERMRRAEPRAEPAADGVGAVSRDLEKHGAITSSNTAATNADCAWLEAQEEEEVGFPVRPQVPLRPMTYKAALDISHFLKEKGGLEGLIWSQRRQEILDLWIYHTQGYFPDWQNYTPGPGIRYPLTFGWCFKLVPVEPEKVEEANEGENNSLLHPMSLHGMEDAEKEVLVWRFDSKLAFHHMARELHPEYYKDC</sequence>
<comment type="function">
    <text evidence="1">Factor of infectivity and pathogenicity, required for optimal virus replication. Alters numerous pathways of T-lymphocyte function and down-regulates immunity surface molecules in order to evade host defense and increase viral infectivity. Alters the functionality of other immunity cells, like dendritic cells, monocytes/macrophages and NK cells.</text>
</comment>
<comment type="function">
    <text evidence="1">In infected CD4(+) T-lymphocytes, down-regulates the surface MHC-I, mature MHC-II, CD4, CD28, CCR5 and CXCR4 molecules. Mediates internalization and degradation of host CD4 through the interaction of with the cytoplasmic tail of CD4, the recruitment of AP-2 (clathrin adapter protein complex 2), internalization through clathrin coated pits, and subsequent transport to endosomes and lysosomes for degradation. Diverts host MHC-I molecules to the trans-Golgi network-associated endosomal compartments by an endocytic pathway to finally target them for degradation. MHC-I down-regulation may involve AP-1 (clathrin adapter protein complex 1) or possibly Src family kinase-ZAP70/Syk-PI3K cascade recruited by PACS2. In consequence infected cells are masked for immune recognition by cytotoxic T-lymphocytes. Decreasing the number of immune receptors also prevents reinfection by more HIV particles (superinfection). Down-regulates host SERINC3 and SERINC5 thereby excluding these proteins from the viral particles. Virion infectivity is drastically higher when SERINC3 or SERINC5 are excluded from the viral envelope, because these host antiviral proteins impair the membrane fusion event necessary for subsequent virion penetration.</text>
</comment>
<comment type="function">
    <text evidence="1 3">Bypasses host T-cell signaling by inducing a transcriptional program nearly identical to that of anti-CD3 cell activation. Interaction with TCR-zeta chain up-regulates the Fas ligand (FasL). Increasing surface FasL molecules and decreasing surface MHC-I molecules on infected CD4(+) cells send attacking cytotoxic CD8+ T-lymphocytes into apoptosis.</text>
</comment>
<comment type="function">
    <text evidence="1 6">Plays a role in optimizing the host cell environment for viral replication without causing cell death by apoptosis. Protects the infected cells from apoptosis in order to keep them alive until the next virus generation is ready to strike. Inhibits the Fas and TNFR-mediated death signals by blocking MAP3K5/ASK1. Decreases the half-life of TP53, protecting the infected cell against p53-mediated apoptosis. Inhibits the apoptotic signals regulated by the Bcl-2 family proteins through the formation of a Nef/PI3-kinase/PAK2 complex that leads to activation of PAK2 and induces phosphorylation of host BAD.</text>
</comment>
<comment type="function">
    <text evidence="1">Extracellular Nef protein targets CD4(+) T-lymphocytes for apoptosis by interacting with CXCR4 surface receptors.</text>
</comment>
<comment type="subunit">
    <text evidence="1 3 4 6 7 9 10 13">Monomer; cytosolic form. Homodimer; membrane bound form. Interacts with Nef associated p21-activated kinase (PAK2); this interaction activates PAK2. Associates with the Nef-MHC-I-AP1 complex; this complex is required for MHC-I internalization. Interacts (via C-terminus) with host PI3-kinase. Interacts with host PACS1; this interaction seems to be weak. Interacts with host PACS2. Interacts with host LCK and MAPK3; these interactions inhibit the kinase activity of the latter. Interacts with host ATP6V1H; this interaction may play a role in CD4 endocytosis. Associates with the CD4-Nef-AP2 complex; this complex is required for CD4 internalization. Interacts with host AP2 subunit alpha and AP2 subunit sigma2. Interacts with TCR-zeta chain; this interaction up-regulates the Fas ligand (FasL) surface expression. Interacts with host HCK, LYN, and SRC; these interactions activate the Src family kinases. Interacts with MAP3K5; this interaction inhibits the Fas and TNFR-mediated death signals. Interacts with beta-COP and PTE1. Interacts with human RACK1; this increases Nef phosphorylation by PKC. Interacts with TP53; this interaction decreases the half-life of TP53, protecting the infected cell against p53-mediated apoptosis.</text>
</comment>
<comment type="interaction">
    <interactant intactId="EBI-7355020">
        <id>P03407</id>
    </interactant>
    <interactant intactId="EBI-949378">
        <id>Q14457</id>
        <label>BECN1</label>
    </interactant>
    <organismsDiffer>true</organismsDiffer>
    <experiments>2</experiments>
</comment>
<comment type="interaction">
    <interactant intactId="EBI-7355020">
        <id>P03407</id>
    </interactant>
    <interactant intactId="EBI-353826">
        <id>P01730</id>
        <label>CD4</label>
    </interactant>
    <organismsDiffer>true</organismsDiffer>
    <experiments>2</experiments>
</comment>
<comment type="subcellular location">
    <subcellularLocation>
        <location evidence="1">Host cell membrane</location>
        <topology evidence="1">Lipid-anchor</topology>
        <orientation evidence="1">Cytoplasmic side</orientation>
    </subcellularLocation>
    <subcellularLocation>
        <location evidence="1">Virion</location>
    </subcellularLocation>
    <subcellularLocation>
        <location evidence="1">Secreted</location>
    </subcellularLocation>
    <subcellularLocation>
        <location evidence="1">Host Golgi apparatus membrane</location>
    </subcellularLocation>
    <text evidence="1">TGN localization requires PACS1. Associates with the inner plasma membrane through its N-terminal domain. Nef stimulates its own export via the release of exosomes. Incorporated in virions at a rate of about 10 molecules per virion, where it is cleaved.</text>
</comment>
<comment type="induction">
    <text evidence="1">Expressed early in the viral replication cycle.</text>
</comment>
<comment type="domain">
    <text evidence="1">The N-terminal domain is composed of the N-myristoyl glycine and of a cluster of positively charged amino acids. It is required for inner plasma membrane targeting of Nef and virion incorporation, and thereby for infectivity. This domain is also involved in binding to TP53.</text>
</comment>
<comment type="domain">
    <text evidence="1">The SH3-binding domain constituted of PxxP motifs mediates binding to several Src family proteins thereby regulating their tyrosine kinase activity. The same motifs also mediates the association with MAPK3, PI3-kinase and TCR-zeta.</text>
</comment>
<comment type="domain">
    <text evidence="1">The dileucine internalization motif and a diacidic motif seem to be required for binding to AP-2.</text>
</comment>
<comment type="domain">
    <text evidence="1">The acidic region binds to the sorting protein PACS-2, which targets Nef to the paranuclear region, enabling the PxxP motif to direct assembly of an SFK/ZAP-70/PI3K complex that accelerates endocytosis of cell-surface MHC-I.</text>
</comment>
<comment type="PTM">
    <text evidence="1">The virion-associated Nef proteins are cleaved by the viral protease to release the soluble C-terminal core protein. Nef is probably cleaved concomitantly with viral structural proteins on maturation of virus particles.</text>
</comment>
<comment type="PTM">
    <text evidence="1">Myristoylated.</text>
</comment>
<comment type="PTM">
    <text evidence="1 11 14">Phosphorylated on serine residues, probably by host PKCdelta and theta.</text>
</comment>
<comment type="miscellaneous">
    <text evidence="1">HIV-1 lineages are divided in three main groups, M (for Major), O (for Outlier), and N (for New, or Non-M, Non-O). The vast majority of strains found worldwide belong to the group M. Group O seems to be endemic to and largely confined to Cameroon and neighboring countries in West Central Africa, where these viruses represent a small minority of HIV-1 strains. The group N is represented by a limited number of isolates from Cameroonian persons. The group M is further subdivided in 9 clades or subtypes (A to D, F to H, J and K).</text>
</comment>
<comment type="similarity">
    <text evidence="1">Belongs to the lentivirus primate group Nef protein family.</text>
</comment>
<protein>
    <recommendedName>
        <fullName evidence="1">Protein Nef</fullName>
    </recommendedName>
    <alternativeName>
        <fullName evidence="1">3'ORF</fullName>
    </alternativeName>
    <alternativeName>
        <fullName evidence="1">Negative factor</fullName>
        <shortName evidence="1">F-protein</shortName>
    </alternativeName>
    <component>
        <recommendedName>
            <fullName evidence="1">C-terminal core protein</fullName>
        </recommendedName>
    </component>
</protein>
<name>NEF_HV1A2</name>
<proteinExistence type="evidence at protein level"/>
<organism>
    <name type="scientific">Human immunodeficiency virus type 1 group M subtype B (isolate ARV2/SF2)</name>
    <name type="common">HIV-1</name>
    <dbReference type="NCBI Taxonomy" id="11685"/>
    <lineage>
        <taxon>Viruses</taxon>
        <taxon>Riboviria</taxon>
        <taxon>Pararnavirae</taxon>
        <taxon>Artverviricota</taxon>
        <taxon>Revtraviricetes</taxon>
        <taxon>Ortervirales</taxon>
        <taxon>Retroviridae</taxon>
        <taxon>Orthoretrovirinae</taxon>
        <taxon>Lentivirus</taxon>
        <taxon>Human immunodeficiency virus type 1</taxon>
    </lineage>
</organism>
<evidence type="ECO:0000255" key="1">
    <source>
        <dbReference type="HAMAP-Rule" id="MF_04078"/>
    </source>
</evidence>
<evidence type="ECO:0000256" key="2">
    <source>
        <dbReference type="SAM" id="MobiDB-lite"/>
    </source>
</evidence>
<evidence type="ECO:0000269" key="3">
    <source>
    </source>
</evidence>
<evidence type="ECO:0000269" key="4">
    <source>
    </source>
</evidence>
<evidence type="ECO:0000269" key="5">
    <source>
    </source>
</evidence>
<evidence type="ECO:0000269" key="6">
    <source>
    </source>
</evidence>
<evidence type="ECO:0000269" key="7">
    <source>
    </source>
</evidence>
<evidence type="ECO:0000269" key="8">
    <source>
    </source>
</evidence>
<evidence type="ECO:0000269" key="9">
    <source>
    </source>
</evidence>
<evidence type="ECO:0000269" key="10">
    <source>
    </source>
</evidence>
<evidence type="ECO:0000269" key="11">
    <source>
    </source>
</evidence>
<evidence type="ECO:0000269" key="12">
    <source>
    </source>
</evidence>
<evidence type="ECO:0000269" key="13">
    <source>
    </source>
</evidence>
<evidence type="ECO:0000269" key="14">
    <source>
    </source>
</evidence>
<evidence type="ECO:0000269" key="15">
    <source>
    </source>
</evidence>
<evidence type="ECO:0007829" key="16">
    <source>
        <dbReference type="PDB" id="3RBB"/>
    </source>
</evidence>
<evidence type="ECO:0007829" key="17">
    <source>
        <dbReference type="PDB" id="3REA"/>
    </source>
</evidence>
<evidence type="ECO:0007829" key="18">
    <source>
        <dbReference type="PDB" id="4ORZ"/>
    </source>
</evidence>
<evidence type="ECO:0007829" key="19">
    <source>
        <dbReference type="PDB" id="4U5W"/>
    </source>
</evidence>
<evidence type="ECO:0007829" key="20">
    <source>
        <dbReference type="PDB" id="6B72"/>
    </source>
</evidence>
<evidence type="ECO:0007829" key="21">
    <source>
        <dbReference type="PDB" id="7D7S"/>
    </source>
</evidence>
<organismHost>
    <name type="scientific">Homo sapiens</name>
    <name type="common">Human</name>
    <dbReference type="NCBI Taxonomy" id="9606"/>
</organismHost>
<reference key="1">
    <citation type="journal article" date="1985" name="Science">
        <title>Nucleotide sequence and expression of an AIDS-associated retrovirus (ARV-2).</title>
        <authorList>
            <person name="Sanchez-Pescador R."/>
            <person name="Power M.D."/>
            <person name="Barr P.J."/>
            <person name="Steimer K.S."/>
            <person name="Stempien M.M."/>
            <person name="Brown-Shimer S.L."/>
            <person name="Gee W.W."/>
            <person name="Renard A."/>
            <person name="Randolph A."/>
            <person name="Levy J.A."/>
            <person name="Dina D."/>
            <person name="Luciw P.A."/>
        </authorList>
    </citation>
    <scope>NUCLEOTIDE SEQUENCE [GENOMIC RNA]</scope>
</reference>
<reference key="2">
    <citation type="journal article" date="1997" name="J. Virol.">
        <title>Induction of phosphorylation of human immunodeficiency virus type 1 Nef and enhancement of CD4 down-regulation by phorbol myristate acetate.</title>
        <authorList>
            <person name="Luo T."/>
            <person name="Downing J.R."/>
            <person name="Garcia J.V."/>
        </authorList>
    </citation>
    <scope>PHOSPHORYLATION</scope>
    <scope>MUTAGENESIS OF SER-107</scope>
</reference>
<reference key="3">
    <citation type="journal article" date="1997" name="J. Biol. Chem.">
        <title>SH3-mediated Hck tyrosine kinase activation and fibroblast transformation by the Nef protein of HIV-1.</title>
        <authorList>
            <person name="Briggs S.D."/>
            <person name="Sharkey M."/>
            <person name="Stevenson M."/>
            <person name="Smithgall T.E."/>
        </authorList>
    </citation>
    <scope>FUNCTION</scope>
</reference>
<reference key="4">
    <citation type="journal article" date="1998" name="Immunity">
        <title>Interactions between HIV1 Nef and vacuolar ATPase facilitate the internalization of CD4.</title>
        <authorList>
            <person name="Lu X."/>
            <person name="Yu H."/>
            <person name="Liu S.-H."/>
            <person name="Brodsky F.M."/>
            <person name="Peterlin B.M."/>
        </authorList>
    </citation>
    <scope>INTERACTION WITH HUMAN ATP6V1H</scope>
</reference>
<reference key="5">
    <citation type="journal article" date="1999" name="J. Exp. Med.">
        <title>Induction of Fas ligand expression by HIV involves the interaction of Nef with the T cell receptor zeta chain.</title>
        <authorList>
            <person name="Xu X.-N."/>
            <person name="Laffert B."/>
            <person name="Screaton G.R."/>
            <person name="Kraft M."/>
            <person name="Wolf D."/>
            <person name="Kolanus W."/>
            <person name="Mongkolsapay J."/>
            <person name="McMichael A.J."/>
            <person name="Baur A.S."/>
        </authorList>
    </citation>
    <scope>FUNCTION</scope>
    <scope>INTERACTION WITH HOST TCR-ZETA CHAIN/TCR-ZETA</scope>
</reference>
<reference key="6">
    <citation type="journal article" date="1999" name="Virology">
        <title>HIV-1 Nef plays an essential role in two independent processes in CD4 down-regulation: dissociation of the CD4-p56(lck) complex and targeting of CD4 to lysosomes.</title>
        <authorList>
            <person name="Kim Y.-H."/>
            <person name="Chang S.H."/>
            <person name="Kwon J.H."/>
            <person name="Rhee S.S."/>
        </authorList>
    </citation>
    <scope>FUNCTION</scope>
</reference>
<reference key="7">
    <citation type="journal article" date="2000" name="J. Virol.">
        <title>Lentivirus Nef specifically activates Pak2.</title>
        <authorList>
            <person name="Arora V.K."/>
            <person name="Molina R.P."/>
            <person name="Foster J.L."/>
            <person name="Blakemore J.L."/>
            <person name="Chernoff J."/>
            <person name="Fredericksen B.L."/>
            <person name="Garcia J.V."/>
        </authorList>
    </citation>
    <scope>FUNCTION</scope>
    <scope>INTERACTION WITH PAK2</scope>
</reference>
<reference key="8">
    <citation type="journal article" date="2001" name="Immunity">
        <title>Nef triggers a transcriptional program in T cells imitating single-signal T cell activation and inducing HIV virulence mediators.</title>
        <authorList>
            <person name="Simmons A."/>
            <person name="Aluvihare V."/>
            <person name="McMichael A."/>
        </authorList>
    </citation>
    <scope>FUNCTION</scope>
</reference>
<reference key="9">
    <citation type="journal article" date="2001" name="Nat. Med.">
        <title>HIV-1 Nef associated PAK and PI3-kinases stimulate Akt-independent Bad-phosphorylation to induce anti-apoptotic signals.</title>
        <authorList>
            <person name="Wolf D."/>
            <person name="Witte V."/>
            <person name="Laffert B."/>
            <person name="Blume K."/>
            <person name="Stromer E."/>
            <person name="Trapp S."/>
            <person name="d'Aloja P."/>
            <person name="Schuermann A."/>
            <person name="Baur A.S."/>
        </authorList>
    </citation>
    <scope>FUNCTION</scope>
    <scope>IDENTIFICATION IN A NEF/PI3-KINASE/PAK2 COMPLEX</scope>
</reference>
<reference key="10">
    <citation type="journal article" date="2001" name="Curr. Biol.">
        <title>A natural variability in the proline-rich motif of Nef modulates HIV-1 replication in primary T cells.</title>
        <authorList>
            <person name="Fackler O.T."/>
            <person name="Wolf D."/>
            <person name="Weber H.O."/>
            <person name="Laffert B."/>
            <person name="D'Aloja P."/>
            <person name="Schuler-Thurner B."/>
            <person name="Geffin R."/>
            <person name="Saksela K."/>
            <person name="Geyer M."/>
            <person name="Peterlin B.M."/>
            <person name="Schuler G."/>
            <person name="Baur A.S."/>
        </authorList>
    </citation>
    <scope>MUTAGENESIS OF ARG-75</scope>
</reference>
<reference key="11">
    <citation type="journal article" date="2002" name="Virology">
        <title>Interaction between Nef and phosphatidylinositol-3-kinase leads to activation of p21-activated kinase and increased production of HIV.</title>
        <authorList>
            <person name="Linnemann T."/>
            <person name="Zheng Y.-H."/>
            <person name="Mandic R."/>
            <person name="Peterlin B.M."/>
        </authorList>
    </citation>
    <scope>INTERACTION WITH HUMAN PI3-KINASE</scope>
</reference>
<reference key="12">
    <citation type="journal article" date="2002" name="Mol. Biol. Cell">
        <title>Subunit H of the V-ATPase involved in endocytosis shows homology to beta-adaptins.</title>
        <authorList>
            <person name="Geyer M."/>
            <person name="Fackler O.T."/>
            <person name="Peterlin B.M."/>
        </authorList>
    </citation>
    <scope>INTERACTION WITH HUMAN ATP6V1H</scope>
    <scope>MUTAGENESIS OF 168-LEU-LEU-169 AND 178-GLU-ASP-179</scope>
</reference>
<reference key="13">
    <citation type="journal article" date="2002" name="J. Biol. Chem.">
        <title>Subunit H of the V-ATPase binds to the medium chain of adaptor protein complex 2 and connects Nef to the endocytic machinery.</title>
        <authorList>
            <person name="Geyer M."/>
            <person name="Yu H."/>
            <person name="Mandic R."/>
            <person name="Linnemann T."/>
            <person name="Zheng Y.-H."/>
            <person name="Fackler O.T."/>
            <person name="Peterlin B.M."/>
        </authorList>
    </citation>
    <scope>INTERACTION WITH HUMAN ATP6V1H</scope>
</reference>
<reference key="14">
    <citation type="journal article" date="2006" name="J. Biol. Chem.">
        <title>HIV-1 Nef selectively activates Src family kinases Hck, Lyn, and c-Src through direct SH3 domain interaction.</title>
        <authorList>
            <person name="Trible R.P."/>
            <person name="Emert-Sedlak L."/>
            <person name="Smithgall T.E."/>
        </authorList>
    </citation>
    <scope>SH3-BINDING MOTIF</scope>
    <scope>FUNCTION</scope>
    <scope>INTERACTION WITH HOST HCK</scope>
    <scope>INTERACTION WITH HOST LYN</scope>
    <scope>INTERACTION WITH HOST SRC</scope>
</reference>
<reference key="15">
    <citation type="journal article" date="2006" name="Biochemistry">
        <title>Biochemical indication for myristoylation-dependent conformational changes in HIV-1 Nef.</title>
        <authorList>
            <person name="Breuer S."/>
            <person name="Gerlach H."/>
            <person name="Kolaric B."/>
            <person name="Urbanke C."/>
            <person name="Opitz N."/>
            <person name="Geyer M."/>
        </authorList>
    </citation>
    <scope>SUBUNIT</scope>
</reference>
<reference key="16">
    <citation type="journal article" date="2008" name="Virology">
        <title>Novel (n)PKC kinases phosphorylate Nef for increased HIV transcription, replication and perinuclear targeting.</title>
        <authorList>
            <person name="Wolf D."/>
            <person name="Giese S.I."/>
            <person name="Witte V."/>
            <person name="Krautkraemer E."/>
            <person name="Trapp S."/>
            <person name="Sass G."/>
            <person name="Haller C."/>
            <person name="Blume K."/>
            <person name="Fackler O.T."/>
            <person name="Baur A.S."/>
        </authorList>
    </citation>
    <scope>PHOSPHORYLATION AT SER-6</scope>
</reference>
<reference key="17">
    <citation type="journal article" date="2011" name="Traffic">
        <title>Conformation of the dileucine-based sorting motif in HIV-1 Nef revealed by intermolecular domain assembly.</title>
        <authorList>
            <person name="Horenkamp F.A."/>
            <person name="Breuer S."/>
            <person name="Schulte A."/>
            <person name="Lulf S."/>
            <person name="Weyand M."/>
            <person name="Saksela K."/>
            <person name="Geyer M."/>
        </authorList>
    </citation>
    <scope>X-RAY CRYSTALLOGRAPHY (2.35 ANGSTROMS) OF 45-210</scope>
    <scope>DILEUCINE MOTIF</scope>
</reference>
<reference key="18">
    <citation type="journal article" date="2014" name="J. Biol. Chem.">
        <title>Interaction with the Src homology (SH3-SH2) region of the Src-family kinase Hck structures the HIV-1 Nef dimer for kinase activation and effector recruitment.</title>
        <authorList>
            <person name="Alvarado J.J."/>
            <person name="Tarafdar S."/>
            <person name="Yeh J.I."/>
            <person name="Smithgall T.E."/>
        </authorList>
    </citation>
    <scope>X-RAY CRYSTALLOGRAPHY (1.86 ANGSTROMS) OF 62-209</scope>
    <scope>INTERACTION WITH HOST HCK</scope>
</reference>